<accession>Q2FFT3</accession>
<dbReference type="EC" id="3.4.21.-"/>
<dbReference type="EMBL" id="CP000255">
    <property type="protein sequence ID" value="ABD22404.1"/>
    <property type="molecule type" value="Genomic_DNA"/>
</dbReference>
<dbReference type="RefSeq" id="WP_001038759.1">
    <property type="nucleotide sequence ID" value="NZ_CP027476.1"/>
</dbReference>
<dbReference type="SMR" id="Q2FFT3"/>
<dbReference type="MEROPS" id="S01.312"/>
<dbReference type="KEGG" id="saa:SAUSA300_1754"/>
<dbReference type="HOGENOM" id="CLU_073589_2_0_9"/>
<dbReference type="OMA" id="MEIGEHI"/>
<dbReference type="Proteomes" id="UP000001939">
    <property type="component" value="Chromosome"/>
</dbReference>
<dbReference type="GO" id="GO:0005576">
    <property type="term" value="C:extracellular region"/>
    <property type="evidence" value="ECO:0007669"/>
    <property type="project" value="UniProtKB-SubCell"/>
</dbReference>
<dbReference type="GO" id="GO:0004252">
    <property type="term" value="F:serine-type endopeptidase activity"/>
    <property type="evidence" value="ECO:0007669"/>
    <property type="project" value="InterPro"/>
</dbReference>
<dbReference type="GO" id="GO:0006508">
    <property type="term" value="P:proteolysis"/>
    <property type="evidence" value="ECO:0007669"/>
    <property type="project" value="UniProtKB-KW"/>
</dbReference>
<dbReference type="Gene3D" id="2.40.10.10">
    <property type="entry name" value="Trypsin-like serine proteases"/>
    <property type="match status" value="2"/>
</dbReference>
<dbReference type="InterPro" id="IPR009003">
    <property type="entry name" value="Peptidase_S1_PA"/>
</dbReference>
<dbReference type="InterPro" id="IPR043504">
    <property type="entry name" value="Peptidase_S1_PA_chymotrypsin"/>
</dbReference>
<dbReference type="InterPro" id="IPR008256">
    <property type="entry name" value="Peptidase_S1B"/>
</dbReference>
<dbReference type="InterPro" id="IPR008353">
    <property type="entry name" value="Peptidase_S1B_tx"/>
</dbReference>
<dbReference type="InterPro" id="IPR001254">
    <property type="entry name" value="Trypsin_dom"/>
</dbReference>
<dbReference type="InterPro" id="IPR028301">
    <property type="entry name" value="V8_his_AS"/>
</dbReference>
<dbReference type="PANTHER" id="PTHR43019:SF23">
    <property type="entry name" value="PROTEASE DO-LIKE 5, CHLOROPLASTIC"/>
    <property type="match status" value="1"/>
</dbReference>
<dbReference type="PANTHER" id="PTHR43019">
    <property type="entry name" value="SERINE ENDOPROTEASE DEGS"/>
    <property type="match status" value="1"/>
</dbReference>
<dbReference type="Pfam" id="PF00089">
    <property type="entry name" value="Trypsin"/>
    <property type="match status" value="1"/>
</dbReference>
<dbReference type="PRINTS" id="PR01774">
    <property type="entry name" value="EXFOLTOXIN"/>
</dbReference>
<dbReference type="PRINTS" id="PR00839">
    <property type="entry name" value="V8PROTEASE"/>
</dbReference>
<dbReference type="SUPFAM" id="SSF50494">
    <property type="entry name" value="Trypsin-like serine proteases"/>
    <property type="match status" value="1"/>
</dbReference>
<dbReference type="PROSITE" id="PS00672">
    <property type="entry name" value="V8_HIS"/>
    <property type="match status" value="1"/>
</dbReference>
<comment type="subcellular location">
    <subcellularLocation>
        <location evidence="1">Secreted</location>
    </subcellularLocation>
</comment>
<comment type="similarity">
    <text evidence="3">Belongs to the peptidase S1B family.</text>
</comment>
<evidence type="ECO:0000250" key="1"/>
<evidence type="ECO:0000255" key="2"/>
<evidence type="ECO:0000305" key="3"/>
<name>SPLE_STAA3</name>
<reference key="1">
    <citation type="journal article" date="2006" name="Lancet">
        <title>Complete genome sequence of USA300, an epidemic clone of community-acquired meticillin-resistant Staphylococcus aureus.</title>
        <authorList>
            <person name="Diep B.A."/>
            <person name="Gill S.R."/>
            <person name="Chang R.F."/>
            <person name="Phan T.H."/>
            <person name="Chen J.H."/>
            <person name="Davidson M.G."/>
            <person name="Lin F."/>
            <person name="Lin J."/>
            <person name="Carleton H.A."/>
            <person name="Mongodin E.F."/>
            <person name="Sensabaugh G.F."/>
            <person name="Perdreau-Remington F."/>
        </authorList>
    </citation>
    <scope>NUCLEOTIDE SEQUENCE [LARGE SCALE GENOMIC DNA]</scope>
    <source>
        <strain>USA300</strain>
    </source>
</reference>
<feature type="signal peptide" evidence="2">
    <location>
        <begin position="1"/>
        <end position="36"/>
    </location>
</feature>
<feature type="chain" id="PRO_0000359578" description="Serine protease SplE">
    <location>
        <begin position="37"/>
        <end position="238"/>
    </location>
</feature>
<feature type="active site" description="Charge relay system" evidence="1">
    <location>
        <position position="75"/>
    </location>
</feature>
<feature type="active site" description="Charge relay system" evidence="1">
    <location>
        <position position="113"/>
    </location>
</feature>
<feature type="active site" description="Charge relay system" evidence="1">
    <location>
        <position position="191"/>
    </location>
</feature>
<gene>
    <name type="primary">splE</name>
    <name type="ordered locus">SAUSA300_1754</name>
</gene>
<organism>
    <name type="scientific">Staphylococcus aureus (strain USA300)</name>
    <dbReference type="NCBI Taxonomy" id="367830"/>
    <lineage>
        <taxon>Bacteria</taxon>
        <taxon>Bacillati</taxon>
        <taxon>Bacillota</taxon>
        <taxon>Bacilli</taxon>
        <taxon>Bacillales</taxon>
        <taxon>Staphylococcaceae</taxon>
        <taxon>Staphylococcus</taxon>
    </lineage>
</organism>
<sequence length="238" mass="25679">MNKNIIIKSIAALTILTSVTGVGTTVVEGIQQTAKAEHNVKLIKNTNVAPYNGVVSIGSGTGFIVGKNTIVTNKHVVAGMEIGAHIIAHPNGEYNNGGFYKVKKIVRYSGQEDIAILHVEDKAVHPKNRNFKDYTGILKIASEAKENERISIVGYPEPYINKFQMYESTGKVLSVKGNMIITDAFVEPGNSGSAVFNSKYEVVGVHFGGNGPGNKSTKGYGVYFSPEIKKFIADNTDK</sequence>
<proteinExistence type="inferred from homology"/>
<protein>
    <recommendedName>
        <fullName>Serine protease SplE</fullName>
        <ecNumber>3.4.21.-</ecNumber>
    </recommendedName>
</protein>
<keyword id="KW-0378">Hydrolase</keyword>
<keyword id="KW-0645">Protease</keyword>
<keyword id="KW-0964">Secreted</keyword>
<keyword id="KW-0720">Serine protease</keyword>
<keyword id="KW-0732">Signal</keyword>